<name>SURE_METPB</name>
<protein>
    <recommendedName>
        <fullName evidence="1">5'-nucleotidase SurE</fullName>
        <ecNumber evidence="1">3.1.3.5</ecNumber>
    </recommendedName>
    <alternativeName>
        <fullName evidence="1">Nucleoside 5'-monophosphate phosphohydrolase</fullName>
    </alternativeName>
</protein>
<reference key="1">
    <citation type="submission" date="2008-04" db="EMBL/GenBank/DDBJ databases">
        <title>Complete sequence of chromosome of Methylobacterium populi BJ001.</title>
        <authorList>
            <consortium name="US DOE Joint Genome Institute"/>
            <person name="Copeland A."/>
            <person name="Lucas S."/>
            <person name="Lapidus A."/>
            <person name="Glavina del Rio T."/>
            <person name="Dalin E."/>
            <person name="Tice H."/>
            <person name="Bruce D."/>
            <person name="Goodwin L."/>
            <person name="Pitluck S."/>
            <person name="Chertkov O."/>
            <person name="Brettin T."/>
            <person name="Detter J.C."/>
            <person name="Han C."/>
            <person name="Kuske C.R."/>
            <person name="Schmutz J."/>
            <person name="Larimer F."/>
            <person name="Land M."/>
            <person name="Hauser L."/>
            <person name="Kyrpides N."/>
            <person name="Mikhailova N."/>
            <person name="Marx C."/>
            <person name="Richardson P."/>
        </authorList>
    </citation>
    <scope>NUCLEOTIDE SEQUENCE [LARGE SCALE GENOMIC DNA]</scope>
    <source>
        <strain>ATCC BAA-705 / NCIMB 13946 / BJ001</strain>
    </source>
</reference>
<accession>B1ZJ09</accession>
<dbReference type="EC" id="3.1.3.5" evidence="1"/>
<dbReference type="EMBL" id="CP001029">
    <property type="protein sequence ID" value="ACB82848.1"/>
    <property type="molecule type" value="Genomic_DNA"/>
</dbReference>
<dbReference type="RefSeq" id="WP_012456446.1">
    <property type="nucleotide sequence ID" value="NC_010725.1"/>
</dbReference>
<dbReference type="SMR" id="B1ZJ09"/>
<dbReference type="STRING" id="441620.Mpop_4752"/>
<dbReference type="KEGG" id="mpo:Mpop_4752"/>
<dbReference type="eggNOG" id="COG0496">
    <property type="taxonomic scope" value="Bacteria"/>
</dbReference>
<dbReference type="HOGENOM" id="CLU_045192_1_2_5"/>
<dbReference type="OrthoDB" id="9780815at2"/>
<dbReference type="Proteomes" id="UP000007136">
    <property type="component" value="Chromosome"/>
</dbReference>
<dbReference type="GO" id="GO:0005737">
    <property type="term" value="C:cytoplasm"/>
    <property type="evidence" value="ECO:0007669"/>
    <property type="project" value="UniProtKB-SubCell"/>
</dbReference>
<dbReference type="GO" id="GO:0008254">
    <property type="term" value="F:3'-nucleotidase activity"/>
    <property type="evidence" value="ECO:0007669"/>
    <property type="project" value="TreeGrafter"/>
</dbReference>
<dbReference type="GO" id="GO:0008253">
    <property type="term" value="F:5'-nucleotidase activity"/>
    <property type="evidence" value="ECO:0007669"/>
    <property type="project" value="UniProtKB-UniRule"/>
</dbReference>
<dbReference type="GO" id="GO:0004309">
    <property type="term" value="F:exopolyphosphatase activity"/>
    <property type="evidence" value="ECO:0007669"/>
    <property type="project" value="TreeGrafter"/>
</dbReference>
<dbReference type="GO" id="GO:0046872">
    <property type="term" value="F:metal ion binding"/>
    <property type="evidence" value="ECO:0007669"/>
    <property type="project" value="UniProtKB-UniRule"/>
</dbReference>
<dbReference type="GO" id="GO:0000166">
    <property type="term" value="F:nucleotide binding"/>
    <property type="evidence" value="ECO:0007669"/>
    <property type="project" value="UniProtKB-KW"/>
</dbReference>
<dbReference type="FunFam" id="3.40.1210.10:FF:000001">
    <property type="entry name" value="5'/3'-nucleotidase SurE"/>
    <property type="match status" value="1"/>
</dbReference>
<dbReference type="Gene3D" id="3.40.1210.10">
    <property type="entry name" value="Survival protein SurE-like phosphatase/nucleotidase"/>
    <property type="match status" value="1"/>
</dbReference>
<dbReference type="HAMAP" id="MF_00060">
    <property type="entry name" value="SurE"/>
    <property type="match status" value="1"/>
</dbReference>
<dbReference type="InterPro" id="IPR030048">
    <property type="entry name" value="SurE"/>
</dbReference>
<dbReference type="InterPro" id="IPR002828">
    <property type="entry name" value="SurE-like_Pase/nucleotidase"/>
</dbReference>
<dbReference type="InterPro" id="IPR036523">
    <property type="entry name" value="SurE-like_sf"/>
</dbReference>
<dbReference type="NCBIfam" id="NF001490">
    <property type="entry name" value="PRK00346.1-4"/>
    <property type="match status" value="1"/>
</dbReference>
<dbReference type="NCBIfam" id="TIGR00087">
    <property type="entry name" value="surE"/>
    <property type="match status" value="1"/>
</dbReference>
<dbReference type="PANTHER" id="PTHR30457">
    <property type="entry name" value="5'-NUCLEOTIDASE SURE"/>
    <property type="match status" value="1"/>
</dbReference>
<dbReference type="PANTHER" id="PTHR30457:SF12">
    <property type="entry name" value="5'_3'-NUCLEOTIDASE SURE"/>
    <property type="match status" value="1"/>
</dbReference>
<dbReference type="Pfam" id="PF01975">
    <property type="entry name" value="SurE"/>
    <property type="match status" value="1"/>
</dbReference>
<dbReference type="SUPFAM" id="SSF64167">
    <property type="entry name" value="SurE-like"/>
    <property type="match status" value="1"/>
</dbReference>
<evidence type="ECO:0000255" key="1">
    <source>
        <dbReference type="HAMAP-Rule" id="MF_00060"/>
    </source>
</evidence>
<feature type="chain" id="PRO_1000092018" description="5'-nucleotidase SurE">
    <location>
        <begin position="1"/>
        <end position="254"/>
    </location>
</feature>
<feature type="binding site" evidence="1">
    <location>
        <position position="8"/>
    </location>
    <ligand>
        <name>a divalent metal cation</name>
        <dbReference type="ChEBI" id="CHEBI:60240"/>
    </ligand>
</feature>
<feature type="binding site" evidence="1">
    <location>
        <position position="9"/>
    </location>
    <ligand>
        <name>a divalent metal cation</name>
        <dbReference type="ChEBI" id="CHEBI:60240"/>
    </ligand>
</feature>
<feature type="binding site" evidence="1">
    <location>
        <position position="40"/>
    </location>
    <ligand>
        <name>a divalent metal cation</name>
        <dbReference type="ChEBI" id="CHEBI:60240"/>
    </ligand>
</feature>
<feature type="binding site" evidence="1">
    <location>
        <position position="93"/>
    </location>
    <ligand>
        <name>a divalent metal cation</name>
        <dbReference type="ChEBI" id="CHEBI:60240"/>
    </ligand>
</feature>
<sequence>MRILVTNDDGIHAPGLETLQGIARELSDDVWVVAPEYDQSGVSHSLSLNDPLRLRQVSEKRFAVKGTPSDCVIMGVSHILKDHRPDLVLSGVNRGQNVAEDVTYSGTIAGAMEGTILGIRAIALSQAYGAGGRANLKWSCAAAHGAAVIRKILEIGIEPGILVNVNFPDCEPEEVQGVAVSAQGQRNQALLQIDARHDGRGNPYFWLAFAKARFEPGNGTDLKAIAENRIAVTPLRLDLTDEPELTRFAAAFRA</sequence>
<keyword id="KW-0963">Cytoplasm</keyword>
<keyword id="KW-0378">Hydrolase</keyword>
<keyword id="KW-0479">Metal-binding</keyword>
<keyword id="KW-0547">Nucleotide-binding</keyword>
<comment type="function">
    <text evidence="1">Nucleotidase that shows phosphatase activity on nucleoside 5'-monophosphates.</text>
</comment>
<comment type="catalytic activity">
    <reaction evidence="1">
        <text>a ribonucleoside 5'-phosphate + H2O = a ribonucleoside + phosphate</text>
        <dbReference type="Rhea" id="RHEA:12484"/>
        <dbReference type="ChEBI" id="CHEBI:15377"/>
        <dbReference type="ChEBI" id="CHEBI:18254"/>
        <dbReference type="ChEBI" id="CHEBI:43474"/>
        <dbReference type="ChEBI" id="CHEBI:58043"/>
        <dbReference type="EC" id="3.1.3.5"/>
    </reaction>
</comment>
<comment type="cofactor">
    <cofactor evidence="1">
        <name>a divalent metal cation</name>
        <dbReference type="ChEBI" id="CHEBI:60240"/>
    </cofactor>
    <text evidence="1">Binds 1 divalent metal cation per subunit.</text>
</comment>
<comment type="subcellular location">
    <subcellularLocation>
        <location evidence="1">Cytoplasm</location>
    </subcellularLocation>
</comment>
<comment type="similarity">
    <text evidence="1">Belongs to the SurE nucleotidase family.</text>
</comment>
<gene>
    <name evidence="1" type="primary">surE</name>
    <name type="ordered locus">Mpop_4752</name>
</gene>
<organism>
    <name type="scientific">Methylorubrum populi (strain ATCC BAA-705 / NCIMB 13946 / BJ001)</name>
    <name type="common">Methylobacterium populi</name>
    <dbReference type="NCBI Taxonomy" id="441620"/>
    <lineage>
        <taxon>Bacteria</taxon>
        <taxon>Pseudomonadati</taxon>
        <taxon>Pseudomonadota</taxon>
        <taxon>Alphaproteobacteria</taxon>
        <taxon>Hyphomicrobiales</taxon>
        <taxon>Methylobacteriaceae</taxon>
        <taxon>Methylorubrum</taxon>
    </lineage>
</organism>
<proteinExistence type="inferred from homology"/>